<proteinExistence type="evidence at protein level"/>
<protein>
    <recommendedName>
        <fullName evidence="5">Sesquiterpene synthase Cad</fullName>
    </recommendedName>
    <alternativeName>
        <fullName evidence="5">Beta-cadinene synthase</fullName>
        <shortName evidence="5">Cf-Cad</shortName>
        <ecNumber evidence="4">4.2.3.-</ecNumber>
    </alternativeName>
</protein>
<name>CAD_CHAFM</name>
<feature type="chain" id="PRO_0000454949" description="Sesquiterpene synthase Cad">
    <location>
        <begin position="1"/>
        <end position="603"/>
    </location>
</feature>
<feature type="region of interest" description="Disordered" evidence="3">
    <location>
        <begin position="1"/>
        <end position="23"/>
    </location>
</feature>
<feature type="short sequence motif" description="DDXXD motif" evidence="1">
    <location>
        <begin position="357"/>
        <end position="361"/>
    </location>
</feature>
<feature type="compositionally biased region" description="Polar residues" evidence="3">
    <location>
        <begin position="1"/>
        <end position="13"/>
    </location>
</feature>
<feature type="binding site" evidence="2">
    <location>
        <position position="357"/>
    </location>
    <ligand>
        <name>Mg(2+)</name>
        <dbReference type="ChEBI" id="CHEBI:18420"/>
        <label>1</label>
    </ligand>
</feature>
<feature type="binding site" evidence="2">
    <location>
        <position position="357"/>
    </location>
    <ligand>
        <name>Mg(2+)</name>
        <dbReference type="ChEBI" id="CHEBI:18420"/>
        <label>2</label>
    </ligand>
</feature>
<feature type="binding site" evidence="2">
    <location>
        <position position="361"/>
    </location>
    <ligand>
        <name>Mg(2+)</name>
        <dbReference type="ChEBI" id="CHEBI:18420"/>
        <label>1</label>
    </ligand>
</feature>
<feature type="binding site" evidence="2">
    <location>
        <position position="361"/>
    </location>
    <ligand>
        <name>Mg(2+)</name>
        <dbReference type="ChEBI" id="CHEBI:18420"/>
        <label>2</label>
    </ligand>
</feature>
<feature type="binding site" evidence="2">
    <location>
        <position position="498"/>
    </location>
    <ligand>
        <name>Mg(2+)</name>
        <dbReference type="ChEBI" id="CHEBI:18420"/>
        <label>3</label>
    </ligand>
</feature>
<feature type="binding site" evidence="2">
    <location>
        <position position="506"/>
    </location>
    <ligand>
        <name>Mg(2+)</name>
        <dbReference type="ChEBI" id="CHEBI:18420"/>
        <label>3</label>
    </ligand>
</feature>
<dbReference type="EC" id="4.2.3.-" evidence="4"/>
<dbReference type="EMBL" id="JN715077">
    <property type="protein sequence ID" value="AFJ23663.1"/>
    <property type="molecule type" value="mRNA"/>
</dbReference>
<dbReference type="SMR" id="I1ZHA5"/>
<dbReference type="UniPathway" id="UPA00213"/>
<dbReference type="GO" id="GO:0000287">
    <property type="term" value="F:magnesium ion binding"/>
    <property type="evidence" value="ECO:0007669"/>
    <property type="project" value="InterPro"/>
</dbReference>
<dbReference type="GO" id="GO:0010333">
    <property type="term" value="F:terpene synthase activity"/>
    <property type="evidence" value="ECO:0000314"/>
    <property type="project" value="UniProtKB"/>
</dbReference>
<dbReference type="GO" id="GO:1901928">
    <property type="term" value="P:cadinene biosynthetic process"/>
    <property type="evidence" value="ECO:0000314"/>
    <property type="project" value="UniProtKB"/>
</dbReference>
<dbReference type="GO" id="GO:0016102">
    <property type="term" value="P:diterpenoid biosynthetic process"/>
    <property type="evidence" value="ECO:0007669"/>
    <property type="project" value="InterPro"/>
</dbReference>
<dbReference type="GO" id="GO:0010597">
    <property type="term" value="P:green leaf volatile biosynthetic process"/>
    <property type="evidence" value="ECO:0000314"/>
    <property type="project" value="UniProtKB"/>
</dbReference>
<dbReference type="GO" id="GO:0051762">
    <property type="term" value="P:sesquiterpene biosynthetic process"/>
    <property type="evidence" value="ECO:0000314"/>
    <property type="project" value="UniProtKB"/>
</dbReference>
<dbReference type="CDD" id="cd00684">
    <property type="entry name" value="Terpene_cyclase_plant_C1"/>
    <property type="match status" value="1"/>
</dbReference>
<dbReference type="FunFam" id="1.50.10.130:FF:000002">
    <property type="entry name" value="Ent-copalyl diphosphate synthase, chloroplastic"/>
    <property type="match status" value="1"/>
</dbReference>
<dbReference type="Gene3D" id="1.10.600.10">
    <property type="entry name" value="Farnesyl Diphosphate Synthase"/>
    <property type="match status" value="1"/>
</dbReference>
<dbReference type="Gene3D" id="1.50.10.130">
    <property type="entry name" value="Terpene synthase, N-terminal domain"/>
    <property type="match status" value="1"/>
</dbReference>
<dbReference type="InterPro" id="IPR008949">
    <property type="entry name" value="Isoprenoid_synthase_dom_sf"/>
</dbReference>
<dbReference type="InterPro" id="IPR034741">
    <property type="entry name" value="Terpene_cyclase-like_1_C"/>
</dbReference>
<dbReference type="InterPro" id="IPR044814">
    <property type="entry name" value="Terpene_cyclase_plant_C1"/>
</dbReference>
<dbReference type="InterPro" id="IPR001906">
    <property type="entry name" value="Terpene_synth_N"/>
</dbReference>
<dbReference type="InterPro" id="IPR036965">
    <property type="entry name" value="Terpene_synth_N_sf"/>
</dbReference>
<dbReference type="InterPro" id="IPR050148">
    <property type="entry name" value="Terpene_synthase-like"/>
</dbReference>
<dbReference type="InterPro" id="IPR005630">
    <property type="entry name" value="Terpene_synthase_metal-bd"/>
</dbReference>
<dbReference type="InterPro" id="IPR008930">
    <property type="entry name" value="Terpenoid_cyclase/PrenylTrfase"/>
</dbReference>
<dbReference type="PANTHER" id="PTHR31739:SF25">
    <property type="entry name" value="(E,E)-GERANYLLINALOOL SYNTHASE"/>
    <property type="match status" value="1"/>
</dbReference>
<dbReference type="PANTHER" id="PTHR31739">
    <property type="entry name" value="ENT-COPALYL DIPHOSPHATE SYNTHASE, CHLOROPLASTIC"/>
    <property type="match status" value="1"/>
</dbReference>
<dbReference type="Pfam" id="PF01397">
    <property type="entry name" value="Terpene_synth"/>
    <property type="match status" value="1"/>
</dbReference>
<dbReference type="Pfam" id="PF03936">
    <property type="entry name" value="Terpene_synth_C"/>
    <property type="match status" value="1"/>
</dbReference>
<dbReference type="SFLD" id="SFLDS00005">
    <property type="entry name" value="Isoprenoid_Synthase_Type_I"/>
    <property type="match status" value="1"/>
</dbReference>
<dbReference type="SFLD" id="SFLDG01019">
    <property type="entry name" value="Terpene_Cyclase_Like_1_C_Termi"/>
    <property type="match status" value="1"/>
</dbReference>
<dbReference type="SUPFAM" id="SSF48239">
    <property type="entry name" value="Terpenoid cyclases/Protein prenyltransferases"/>
    <property type="match status" value="1"/>
</dbReference>
<dbReference type="SUPFAM" id="SSF48576">
    <property type="entry name" value="Terpenoid synthases"/>
    <property type="match status" value="1"/>
</dbReference>
<reference key="1">
    <citation type="journal article" date="2012" name="Holzforschung">
        <title>Isolation and characterization of beta-cadinene synthase cDNA from Chamaecyparis formosensis Matsum.</title>
        <authorList>
            <person name="Kuo P.-M."/>
            <person name="Hsu K.-H."/>
            <person name="Lee Y.-R."/>
            <person name="Chu F.-H."/>
            <person name="Wang S.-Y."/>
        </authorList>
    </citation>
    <scope>NUCLEOTIDE SEQUENCE [MRNA]</scope>
    <scope>FUNCTION</scope>
    <scope>CATALYTIC ACTIVITY</scope>
    <scope>PATHWAY</scope>
    <scope>TISSUE SPECIFICITY</scope>
</reference>
<comment type="function">
    <text evidence="4">Sesquiterpene synthase involved in the biosynthesis of volatile compounds (Ref.1). Mediates the conversion of (2E,6E)-farnesyl diphosphate (FPP) into beta-cadinene (Ref.1). Not active with geranyl diphosphate (GPP) and geranylgeranyl diphosphate (GGPP) as substrates (Ref.1).</text>
</comment>
<comment type="catalytic activity">
    <reaction evidence="4">
        <text>(2E,6E)-farnesyl diphosphate = beta-cadinene + diphosphate</text>
        <dbReference type="Rhea" id="RHEA:68596"/>
        <dbReference type="ChEBI" id="CHEBI:27723"/>
        <dbReference type="ChEBI" id="CHEBI:33019"/>
        <dbReference type="ChEBI" id="CHEBI:175763"/>
    </reaction>
    <physiologicalReaction direction="left-to-right" evidence="4">
        <dbReference type="Rhea" id="RHEA:68597"/>
    </physiologicalReaction>
</comment>
<comment type="cofactor">
    <cofactor evidence="1">
        <name>Mg(2+)</name>
        <dbReference type="ChEBI" id="CHEBI:18420"/>
    </cofactor>
    <cofactor evidence="1">
        <name>Mn(2+)</name>
        <dbReference type="ChEBI" id="CHEBI:29035"/>
    </cofactor>
    <text evidence="1">Binds 3 Mg(2+) or Mn(2+) ions per subunit.</text>
</comment>
<comment type="pathway">
    <text evidence="4">Secondary metabolite biosynthesis; terpenoid biosynthesis.</text>
</comment>
<comment type="tissue specificity">
    <text evidence="4">Mostly expressed in leaves and, to a lower extent, in stems and xylem.</text>
</comment>
<comment type="domain">
    <text evidence="2">The Asp-Asp-Xaa-Xaa-Asp/Glu (DDXXD/E) motif is important for the catalytic activity, presumably through binding to Mg(2+).</text>
</comment>
<comment type="similarity">
    <text evidence="6">Belongs to the terpene synthase family. Tpsa subfamily.</text>
</comment>
<organism>
    <name type="scientific">Chamaecyparis formosensis</name>
    <name type="common">Formosan cypress</name>
    <name type="synonym">Cupressus formosensis</name>
    <dbReference type="NCBI Taxonomy" id="187461"/>
    <lineage>
        <taxon>Eukaryota</taxon>
        <taxon>Viridiplantae</taxon>
        <taxon>Streptophyta</taxon>
        <taxon>Embryophyta</taxon>
        <taxon>Tracheophyta</taxon>
        <taxon>Spermatophyta</taxon>
        <taxon>Pinopsida</taxon>
        <taxon>Pinidae</taxon>
        <taxon>Conifers II</taxon>
        <taxon>Cupressales</taxon>
        <taxon>Cupressaceae</taxon>
        <taxon>Chamaecyparis</taxon>
    </lineage>
</organism>
<keyword id="KW-0456">Lyase</keyword>
<keyword id="KW-0460">Magnesium</keyword>
<keyword id="KW-0479">Metal-binding</keyword>
<gene>
    <name evidence="5" type="primary">CAD</name>
</gene>
<accession>I1ZHA5</accession>
<sequence length="603" mass="70796">MAEVGLSQNSYASANHDKKSEQQIRRRVAEFHPNVWEYEFLQSLSSPYGAPSYCERINILIEEIKMDIFDGLVGDGEKNMNPSAYDLLERFFVVDILQSLGIERHFKKEIKAVLDYTYKYWNDEKGISLASGNLIVDLNTNALGFKVLRLNEYYVSPDVFQNFQDEMGQFIDLENFKEDESKLRSLLSLYRASEICFPEENILKQAKMFASTCLRQAIEENRELVNKSQLIIEVEYIMKYPWTCRVPRWEVWNYIKIFRGDTDASMCMKGVYEMPSDKRTKILELAILDFNILQDQHHNELKILSKWWNETKVKELNFFRQRHVEFYFLYACGLYEKELSATRLCFAKVGALITLLDDIFDTYGTIDELVPFATALIKWDMSIMNHLPEYMKTCFQFAYKTYMEIATEAEKIHGPCVQKWMHDTWKTIILAQLQDAEWIANNYLPSLTEYLESSVPSTTVPVLSLFSMLLIDTIFPDDIIEKITKFQSCVAWGCRLVDDSKDFQDEKEHGESASWIECYMKENPGTTRKQALDHANMLIESNFEELIKHRIFYEYCIPSTCKRLYFDMYRSVAFIFKDIDGFSKSSKAIRDDIKKILVEPIYF</sequence>
<evidence type="ECO:0000250" key="1">
    <source>
        <dbReference type="UniProtKB" id="A0A1C9J6A7"/>
    </source>
</evidence>
<evidence type="ECO:0000250" key="2">
    <source>
        <dbReference type="UniProtKB" id="Q40577"/>
    </source>
</evidence>
<evidence type="ECO:0000256" key="3">
    <source>
        <dbReference type="SAM" id="MobiDB-lite"/>
    </source>
</evidence>
<evidence type="ECO:0000269" key="4">
    <source ref="1"/>
</evidence>
<evidence type="ECO:0000303" key="5">
    <source ref="1"/>
</evidence>
<evidence type="ECO:0000305" key="6"/>